<sequence length="229" mass="25522">MAGLINFEDEQEVKQFLDNLGVEYSYQCYREKDPEGCHRLADYLEGVKKNYESTAQVLQHNCEVNAHAQSCYKLGAYHVTGKGGMKKCLKTAYSCFLKSCNTQGKKSVDACHNVGLLAQDGRALETGPDTTVARQYFEKACEGGFAPSCFNLSTLYIQGFPGLDKSMPLALKYALKACDLGHVWGCANASRMYKLGDGTDKDEQRAEELKNRAKDLHGQEKERQLKFGE</sequence>
<evidence type="ECO:0000250" key="1"/>
<evidence type="ECO:0000256" key="2">
    <source>
        <dbReference type="SAM" id="MobiDB-lite"/>
    </source>
</evidence>
<evidence type="ECO:0000305" key="3"/>
<keyword id="KW-0496">Mitochondrion</keyword>
<keyword id="KW-1185">Reference proteome</keyword>
<keyword id="KW-0677">Repeat</keyword>
<gene>
    <name type="primary">coa7</name>
    <name type="synonym">selrc1</name>
    <name type="ORF">si:ch211-11m18.2</name>
    <name type="ORF">zgc:136252</name>
</gene>
<name>COA7_DANRE</name>
<accession>Q5TYQ3</accession>
<dbReference type="EMBL" id="BX942844">
    <property type="protein sequence ID" value="CAH68867.1"/>
    <property type="molecule type" value="Genomic_DNA"/>
</dbReference>
<dbReference type="EMBL" id="BC115052">
    <property type="protein sequence ID" value="AAI15053.1"/>
    <property type="molecule type" value="mRNA"/>
</dbReference>
<dbReference type="RefSeq" id="NP_001025255.1">
    <property type="nucleotide sequence ID" value="NM_001030084.1"/>
</dbReference>
<dbReference type="SMR" id="Q5TYQ3"/>
<dbReference type="FunCoup" id="Q5TYQ3">
    <property type="interactions" value="931"/>
</dbReference>
<dbReference type="STRING" id="7955.ENSDARP00000026471"/>
<dbReference type="PaxDb" id="7955-ENSDARP00000026471"/>
<dbReference type="Ensembl" id="ENSDART00000012476">
    <property type="protein sequence ID" value="ENSDARP00000026471"/>
    <property type="gene ID" value="ENSDARG00000019355"/>
</dbReference>
<dbReference type="GeneID" id="555268"/>
<dbReference type="KEGG" id="dre:555268"/>
<dbReference type="AGR" id="ZFIN:ZDB-GENE-041014-16"/>
<dbReference type="CTD" id="65260"/>
<dbReference type="ZFIN" id="ZDB-GENE-041014-16">
    <property type="gene designation" value="coa7"/>
</dbReference>
<dbReference type="eggNOG" id="KOG4014">
    <property type="taxonomic scope" value="Eukaryota"/>
</dbReference>
<dbReference type="HOGENOM" id="CLU_000288_36_9_1"/>
<dbReference type="InParanoid" id="Q5TYQ3"/>
<dbReference type="OMA" id="PGCINAG"/>
<dbReference type="OrthoDB" id="272077at2759"/>
<dbReference type="PhylomeDB" id="Q5TYQ3"/>
<dbReference type="TreeFam" id="TF105805"/>
<dbReference type="PRO" id="PR:Q5TYQ3"/>
<dbReference type="Proteomes" id="UP000000437">
    <property type="component" value="Chromosome 20"/>
</dbReference>
<dbReference type="Bgee" id="ENSDARG00000019355">
    <property type="expression patterns" value="Expressed in liver and 22 other cell types or tissues"/>
</dbReference>
<dbReference type="GO" id="GO:0005758">
    <property type="term" value="C:mitochondrial intermembrane space"/>
    <property type="evidence" value="ECO:0000318"/>
    <property type="project" value="GO_Central"/>
</dbReference>
<dbReference type="Gene3D" id="1.25.40.10">
    <property type="entry name" value="Tetratricopeptide repeat domain"/>
    <property type="match status" value="1"/>
</dbReference>
<dbReference type="InterPro" id="IPR040239">
    <property type="entry name" value="HcpB-like"/>
</dbReference>
<dbReference type="InterPro" id="IPR006597">
    <property type="entry name" value="Sel1-like"/>
</dbReference>
<dbReference type="InterPro" id="IPR011990">
    <property type="entry name" value="TPR-like_helical_dom_sf"/>
</dbReference>
<dbReference type="PANTHER" id="PTHR13891">
    <property type="entry name" value="CYTOCHROME C OXIDASE ASSEMBLY FACTOR 7"/>
    <property type="match status" value="1"/>
</dbReference>
<dbReference type="PANTHER" id="PTHR13891:SF1">
    <property type="entry name" value="CYTOCHROME C OXIDASE ASSEMBLY FACTOR 7"/>
    <property type="match status" value="1"/>
</dbReference>
<dbReference type="Pfam" id="PF08238">
    <property type="entry name" value="Sel1"/>
    <property type="match status" value="5"/>
</dbReference>
<dbReference type="SMART" id="SM00671">
    <property type="entry name" value="SEL1"/>
    <property type="match status" value="5"/>
</dbReference>
<dbReference type="SUPFAM" id="SSF81901">
    <property type="entry name" value="HCP-like"/>
    <property type="match status" value="1"/>
</dbReference>
<organism>
    <name type="scientific">Danio rerio</name>
    <name type="common">Zebrafish</name>
    <name type="synonym">Brachydanio rerio</name>
    <dbReference type="NCBI Taxonomy" id="7955"/>
    <lineage>
        <taxon>Eukaryota</taxon>
        <taxon>Metazoa</taxon>
        <taxon>Chordata</taxon>
        <taxon>Craniata</taxon>
        <taxon>Vertebrata</taxon>
        <taxon>Euteleostomi</taxon>
        <taxon>Actinopterygii</taxon>
        <taxon>Neopterygii</taxon>
        <taxon>Teleostei</taxon>
        <taxon>Ostariophysi</taxon>
        <taxon>Cypriniformes</taxon>
        <taxon>Danionidae</taxon>
        <taxon>Danioninae</taxon>
        <taxon>Danio</taxon>
    </lineage>
</organism>
<proteinExistence type="evidence at transcript level"/>
<comment type="function">
    <text evidence="1">May be required for assembly of mitochondrial respiratory chain complexes.</text>
</comment>
<comment type="subcellular location">
    <subcellularLocation>
        <location evidence="1">Mitochondrion intermembrane space</location>
    </subcellularLocation>
</comment>
<comment type="similarity">
    <text evidence="3">Belongs to the hcp beta-lactamase family.</text>
</comment>
<feature type="chain" id="PRO_0000282366" description="Cytochrome c oxidase assembly factor 7">
    <location>
        <begin position="1"/>
        <end position="229"/>
    </location>
</feature>
<feature type="repeat" description="Sel1-like 1">
    <location>
        <begin position="34"/>
        <end position="66"/>
    </location>
</feature>
<feature type="repeat" description="Sel1-like 2">
    <location>
        <begin position="68"/>
        <end position="104"/>
    </location>
</feature>
<feature type="repeat" description="Sel1-like 3">
    <location>
        <begin position="108"/>
        <end position="145"/>
    </location>
</feature>
<feature type="repeat" description="Sel1-like 4">
    <location>
        <begin position="146"/>
        <end position="182"/>
    </location>
</feature>
<feature type="repeat" description="Sel1-like 5">
    <location>
        <begin position="183"/>
        <end position="218"/>
    </location>
</feature>
<feature type="region of interest" description="Disordered" evidence="2">
    <location>
        <begin position="197"/>
        <end position="229"/>
    </location>
</feature>
<protein>
    <recommendedName>
        <fullName>Cytochrome c oxidase assembly factor 7</fullName>
    </recommendedName>
    <alternativeName>
        <fullName>Beta-lactamase hcp-like protein</fullName>
    </alternativeName>
    <alternativeName>
        <fullName>Sel1 repeat-containing protein 1</fullName>
    </alternativeName>
</protein>
<reference key="1">
    <citation type="journal article" date="2013" name="Nature">
        <title>The zebrafish reference genome sequence and its relationship to the human genome.</title>
        <authorList>
            <person name="Howe K."/>
            <person name="Clark M.D."/>
            <person name="Torroja C.F."/>
            <person name="Torrance J."/>
            <person name="Berthelot C."/>
            <person name="Muffato M."/>
            <person name="Collins J.E."/>
            <person name="Humphray S."/>
            <person name="McLaren K."/>
            <person name="Matthews L."/>
            <person name="McLaren S."/>
            <person name="Sealy I."/>
            <person name="Caccamo M."/>
            <person name="Churcher C."/>
            <person name="Scott C."/>
            <person name="Barrett J.C."/>
            <person name="Koch R."/>
            <person name="Rauch G.J."/>
            <person name="White S."/>
            <person name="Chow W."/>
            <person name="Kilian B."/>
            <person name="Quintais L.T."/>
            <person name="Guerra-Assuncao J.A."/>
            <person name="Zhou Y."/>
            <person name="Gu Y."/>
            <person name="Yen J."/>
            <person name="Vogel J.H."/>
            <person name="Eyre T."/>
            <person name="Redmond S."/>
            <person name="Banerjee R."/>
            <person name="Chi J."/>
            <person name="Fu B."/>
            <person name="Langley E."/>
            <person name="Maguire S.F."/>
            <person name="Laird G.K."/>
            <person name="Lloyd D."/>
            <person name="Kenyon E."/>
            <person name="Donaldson S."/>
            <person name="Sehra H."/>
            <person name="Almeida-King J."/>
            <person name="Loveland J."/>
            <person name="Trevanion S."/>
            <person name="Jones M."/>
            <person name="Quail M."/>
            <person name="Willey D."/>
            <person name="Hunt A."/>
            <person name="Burton J."/>
            <person name="Sims S."/>
            <person name="McLay K."/>
            <person name="Plumb B."/>
            <person name="Davis J."/>
            <person name="Clee C."/>
            <person name="Oliver K."/>
            <person name="Clark R."/>
            <person name="Riddle C."/>
            <person name="Elliot D."/>
            <person name="Threadgold G."/>
            <person name="Harden G."/>
            <person name="Ware D."/>
            <person name="Begum S."/>
            <person name="Mortimore B."/>
            <person name="Kerry G."/>
            <person name="Heath P."/>
            <person name="Phillimore B."/>
            <person name="Tracey A."/>
            <person name="Corby N."/>
            <person name="Dunn M."/>
            <person name="Johnson C."/>
            <person name="Wood J."/>
            <person name="Clark S."/>
            <person name="Pelan S."/>
            <person name="Griffiths G."/>
            <person name="Smith M."/>
            <person name="Glithero R."/>
            <person name="Howden P."/>
            <person name="Barker N."/>
            <person name="Lloyd C."/>
            <person name="Stevens C."/>
            <person name="Harley J."/>
            <person name="Holt K."/>
            <person name="Panagiotidis G."/>
            <person name="Lovell J."/>
            <person name="Beasley H."/>
            <person name="Henderson C."/>
            <person name="Gordon D."/>
            <person name="Auger K."/>
            <person name="Wright D."/>
            <person name="Collins J."/>
            <person name="Raisen C."/>
            <person name="Dyer L."/>
            <person name="Leung K."/>
            <person name="Robertson L."/>
            <person name="Ambridge K."/>
            <person name="Leongamornlert D."/>
            <person name="McGuire S."/>
            <person name="Gilderthorp R."/>
            <person name="Griffiths C."/>
            <person name="Manthravadi D."/>
            <person name="Nichol S."/>
            <person name="Barker G."/>
            <person name="Whitehead S."/>
            <person name="Kay M."/>
            <person name="Brown J."/>
            <person name="Murnane C."/>
            <person name="Gray E."/>
            <person name="Humphries M."/>
            <person name="Sycamore N."/>
            <person name="Barker D."/>
            <person name="Saunders D."/>
            <person name="Wallis J."/>
            <person name="Babbage A."/>
            <person name="Hammond S."/>
            <person name="Mashreghi-Mohammadi M."/>
            <person name="Barr L."/>
            <person name="Martin S."/>
            <person name="Wray P."/>
            <person name="Ellington A."/>
            <person name="Matthews N."/>
            <person name="Ellwood M."/>
            <person name="Woodmansey R."/>
            <person name="Clark G."/>
            <person name="Cooper J."/>
            <person name="Tromans A."/>
            <person name="Grafham D."/>
            <person name="Skuce C."/>
            <person name="Pandian R."/>
            <person name="Andrews R."/>
            <person name="Harrison E."/>
            <person name="Kimberley A."/>
            <person name="Garnett J."/>
            <person name="Fosker N."/>
            <person name="Hall R."/>
            <person name="Garner P."/>
            <person name="Kelly D."/>
            <person name="Bird C."/>
            <person name="Palmer S."/>
            <person name="Gehring I."/>
            <person name="Berger A."/>
            <person name="Dooley C.M."/>
            <person name="Ersan-Urun Z."/>
            <person name="Eser C."/>
            <person name="Geiger H."/>
            <person name="Geisler M."/>
            <person name="Karotki L."/>
            <person name="Kirn A."/>
            <person name="Konantz J."/>
            <person name="Konantz M."/>
            <person name="Oberlander M."/>
            <person name="Rudolph-Geiger S."/>
            <person name="Teucke M."/>
            <person name="Lanz C."/>
            <person name="Raddatz G."/>
            <person name="Osoegawa K."/>
            <person name="Zhu B."/>
            <person name="Rapp A."/>
            <person name="Widaa S."/>
            <person name="Langford C."/>
            <person name="Yang F."/>
            <person name="Schuster S.C."/>
            <person name="Carter N.P."/>
            <person name="Harrow J."/>
            <person name="Ning Z."/>
            <person name="Herrero J."/>
            <person name="Searle S.M."/>
            <person name="Enright A."/>
            <person name="Geisler R."/>
            <person name="Plasterk R.H."/>
            <person name="Lee C."/>
            <person name="Westerfield M."/>
            <person name="de Jong P.J."/>
            <person name="Zon L.I."/>
            <person name="Postlethwait J.H."/>
            <person name="Nusslein-Volhard C."/>
            <person name="Hubbard T.J."/>
            <person name="Roest Crollius H."/>
            <person name="Rogers J."/>
            <person name="Stemple D.L."/>
        </authorList>
    </citation>
    <scope>NUCLEOTIDE SEQUENCE [LARGE SCALE GENOMIC DNA]</scope>
    <source>
        <strain>Tuebingen</strain>
    </source>
</reference>
<reference key="2">
    <citation type="submission" date="2006-04" db="EMBL/GenBank/DDBJ databases">
        <authorList>
            <consortium name="NIH - Zebrafish Gene Collection (ZGC) project"/>
        </authorList>
    </citation>
    <scope>NUCLEOTIDE SEQUENCE [LARGE SCALE MRNA]</scope>
    <source>
        <tissue>Heart</tissue>
    </source>
</reference>